<name>YFJD_ECOLI</name>
<proteinExistence type="evidence at protein level"/>
<evidence type="ECO:0000255" key="1"/>
<evidence type="ECO:0000255" key="2">
    <source>
        <dbReference type="PROSITE-ProRule" id="PRU00703"/>
    </source>
</evidence>
<evidence type="ECO:0000255" key="3">
    <source>
        <dbReference type="PROSITE-ProRule" id="PRU01193"/>
    </source>
</evidence>
<evidence type="ECO:0000305" key="4"/>
<keyword id="KW-0129">CBS domain</keyword>
<keyword id="KW-0997">Cell inner membrane</keyword>
<keyword id="KW-1003">Cell membrane</keyword>
<keyword id="KW-0472">Membrane</keyword>
<keyword id="KW-1185">Reference proteome</keyword>
<keyword id="KW-0677">Repeat</keyword>
<keyword id="KW-0812">Transmembrane</keyword>
<keyword id="KW-1133">Transmembrane helix</keyword>
<feature type="chain" id="PRO_0000088357" description="UPF0053 inner membrane protein YfjD">
    <location>
        <begin position="1"/>
        <end position="428"/>
    </location>
</feature>
<feature type="topological domain" description="Cytoplasmic" evidence="1">
    <location>
        <begin position="1"/>
        <end position="3"/>
    </location>
</feature>
<feature type="transmembrane region" description="Helical" evidence="1">
    <location>
        <begin position="4"/>
        <end position="24"/>
    </location>
</feature>
<feature type="topological domain" description="Periplasmic" evidence="1">
    <location>
        <begin position="25"/>
        <end position="64"/>
    </location>
</feature>
<feature type="transmembrane region" description="Helical" evidence="1">
    <location>
        <begin position="65"/>
        <end position="85"/>
    </location>
</feature>
<feature type="topological domain" description="Cytoplasmic" evidence="1">
    <location>
        <begin position="86"/>
        <end position="91"/>
    </location>
</feature>
<feature type="transmembrane region" description="Helical" evidence="1">
    <location>
        <begin position="92"/>
        <end position="112"/>
    </location>
</feature>
<feature type="topological domain" description="Periplasmic" evidence="1">
    <location>
        <begin position="113"/>
        <end position="129"/>
    </location>
</feature>
<feature type="transmembrane region" description="Helical" evidence="1">
    <location>
        <begin position="130"/>
        <end position="150"/>
    </location>
</feature>
<feature type="topological domain" description="Cytoplasmic" evidence="1">
    <location>
        <begin position="151"/>
        <end position="428"/>
    </location>
</feature>
<feature type="domain" description="CNNM transmembrane" evidence="3">
    <location>
        <begin position="2"/>
        <end position="192"/>
    </location>
</feature>
<feature type="domain" description="CBS 1" evidence="2">
    <location>
        <begin position="208"/>
        <end position="270"/>
    </location>
</feature>
<feature type="domain" description="CBS 2" evidence="2">
    <location>
        <begin position="272"/>
        <end position="332"/>
    </location>
</feature>
<gene>
    <name type="primary">yfjD</name>
    <name type="synonym">ypjE</name>
    <name type="ordered locus">b4461</name>
    <name type="ordered locus">JW5415</name>
    <name type="ORF">b2612/b2613</name>
</gene>
<comment type="subcellular location">
    <subcellularLocation>
        <location>Cell inner membrane</location>
        <topology>Multi-pass membrane protein</topology>
    </subcellularLocation>
</comment>
<comment type="similarity">
    <text evidence="4">Belongs to the UPF0053 family.</text>
</comment>
<comment type="sequence caution" evidence="4">
    <conflict type="erroneous initiation">
        <sequence resource="EMBL-CDS" id="BAA16497"/>
    </conflict>
</comment>
<comment type="sequence caution" evidence="4">
    <conflict type="frameshift">
        <sequence resource="EMBL" id="X07863"/>
    </conflict>
</comment>
<protein>
    <recommendedName>
        <fullName>UPF0053 inner membrane protein YfjD</fullName>
    </recommendedName>
</protein>
<accession>P37908</accession>
<accession>P76600</accession>
<accession>P76601</accession>
<accession>P77009</accession>
<accession>Q6BF70</accession>
<dbReference type="EMBL" id="U00096">
    <property type="protein sequence ID" value="AAT48144.3"/>
    <property type="molecule type" value="Genomic_DNA"/>
</dbReference>
<dbReference type="EMBL" id="AP009048">
    <property type="protein sequence ID" value="BAA16497.2"/>
    <property type="status" value="ALT_INIT"/>
    <property type="molecule type" value="Genomic_DNA"/>
</dbReference>
<dbReference type="EMBL" id="X07863">
    <property type="status" value="NOT_ANNOTATED_CDS"/>
    <property type="molecule type" value="Genomic_DNA"/>
</dbReference>
<dbReference type="RefSeq" id="WP_010723175.1">
    <property type="nucleotide sequence ID" value="NZ_STEB01000040.1"/>
</dbReference>
<dbReference type="RefSeq" id="YP_026171.3">
    <property type="nucleotide sequence ID" value="NC_000913.3"/>
</dbReference>
<dbReference type="SMR" id="P37908"/>
<dbReference type="BioGRID" id="4260620">
    <property type="interactions" value="14"/>
</dbReference>
<dbReference type="BioGRID" id="853486">
    <property type="interactions" value="1"/>
</dbReference>
<dbReference type="DIP" id="DIP-12070N"/>
<dbReference type="FunCoup" id="P37908">
    <property type="interactions" value="259"/>
</dbReference>
<dbReference type="IntAct" id="P37908">
    <property type="interactions" value="2"/>
</dbReference>
<dbReference type="STRING" id="511145.b4461"/>
<dbReference type="TCDB" id="1.A.112.2.5">
    <property type="family name" value="the cyclin m mg2+ exporter (cnnm) family"/>
</dbReference>
<dbReference type="jPOST" id="P37908"/>
<dbReference type="PaxDb" id="511145-b4461"/>
<dbReference type="EnsemblBacteria" id="AAT48144">
    <property type="protein sequence ID" value="AAT48144"/>
    <property type="gene ID" value="b4461"/>
</dbReference>
<dbReference type="GeneID" id="2847739"/>
<dbReference type="KEGG" id="ecj:JW5415"/>
<dbReference type="KEGG" id="eco:b4461"/>
<dbReference type="PATRIC" id="fig|511145.12.peg.2710"/>
<dbReference type="EchoBASE" id="EB2336"/>
<dbReference type="eggNOG" id="COG4536">
    <property type="taxonomic scope" value="Bacteria"/>
</dbReference>
<dbReference type="HOGENOM" id="CLU_015237_4_1_6"/>
<dbReference type="InParanoid" id="P37908"/>
<dbReference type="OMA" id="TIGRQHP"/>
<dbReference type="OrthoDB" id="9797674at2"/>
<dbReference type="PhylomeDB" id="P37908"/>
<dbReference type="BioCyc" id="EcoCyc:G7356-MONOMER"/>
<dbReference type="PRO" id="PR:P37908"/>
<dbReference type="Proteomes" id="UP000000625">
    <property type="component" value="Chromosome"/>
</dbReference>
<dbReference type="GO" id="GO:0005886">
    <property type="term" value="C:plasma membrane"/>
    <property type="evidence" value="ECO:0000314"/>
    <property type="project" value="EcoCyc"/>
</dbReference>
<dbReference type="GO" id="GO:0050660">
    <property type="term" value="F:flavin adenine dinucleotide binding"/>
    <property type="evidence" value="ECO:0007669"/>
    <property type="project" value="InterPro"/>
</dbReference>
<dbReference type="CDD" id="cd04590">
    <property type="entry name" value="CBS_pair_CorC_HlyC_assoc"/>
    <property type="match status" value="1"/>
</dbReference>
<dbReference type="FunFam" id="3.10.580.10:FF:000012">
    <property type="entry name" value="DUF21 domain-containing protein"/>
    <property type="match status" value="1"/>
</dbReference>
<dbReference type="FunFam" id="3.30.465.10:FF:000010">
    <property type="entry name" value="DUF21 domain-containing protein"/>
    <property type="match status" value="1"/>
</dbReference>
<dbReference type="Gene3D" id="3.30.465.10">
    <property type="match status" value="1"/>
</dbReference>
<dbReference type="Gene3D" id="3.10.580.10">
    <property type="entry name" value="CBS-domain"/>
    <property type="match status" value="1"/>
</dbReference>
<dbReference type="InterPro" id="IPR000644">
    <property type="entry name" value="CBS_dom"/>
</dbReference>
<dbReference type="InterPro" id="IPR046342">
    <property type="entry name" value="CBS_dom_sf"/>
</dbReference>
<dbReference type="InterPro" id="IPR002550">
    <property type="entry name" value="CNNM"/>
</dbReference>
<dbReference type="InterPro" id="IPR036318">
    <property type="entry name" value="FAD-bd_PCMH-like_sf"/>
</dbReference>
<dbReference type="InterPro" id="IPR016169">
    <property type="entry name" value="FAD-bd_PCMH_sub2"/>
</dbReference>
<dbReference type="InterPro" id="IPR044751">
    <property type="entry name" value="Ion_transp-like_CBS"/>
</dbReference>
<dbReference type="InterPro" id="IPR005170">
    <property type="entry name" value="Transptr-assoc_dom"/>
</dbReference>
<dbReference type="NCBIfam" id="NF008604">
    <property type="entry name" value="PRK11573.1"/>
    <property type="match status" value="1"/>
</dbReference>
<dbReference type="PANTHER" id="PTHR22777">
    <property type="entry name" value="HEMOLYSIN-RELATED"/>
    <property type="match status" value="1"/>
</dbReference>
<dbReference type="PANTHER" id="PTHR22777:SF32">
    <property type="entry name" value="UPF0053 INNER MEMBRANE PROTEIN YFJD"/>
    <property type="match status" value="1"/>
</dbReference>
<dbReference type="Pfam" id="PF00571">
    <property type="entry name" value="CBS"/>
    <property type="match status" value="1"/>
</dbReference>
<dbReference type="Pfam" id="PF01595">
    <property type="entry name" value="CNNM"/>
    <property type="match status" value="1"/>
</dbReference>
<dbReference type="Pfam" id="PF03471">
    <property type="entry name" value="CorC_HlyC"/>
    <property type="match status" value="1"/>
</dbReference>
<dbReference type="SMART" id="SM01091">
    <property type="entry name" value="CorC_HlyC"/>
    <property type="match status" value="1"/>
</dbReference>
<dbReference type="SUPFAM" id="SSF54631">
    <property type="entry name" value="CBS-domain pair"/>
    <property type="match status" value="1"/>
</dbReference>
<dbReference type="SUPFAM" id="SSF56176">
    <property type="entry name" value="FAD-binding/transporter-associated domain-like"/>
    <property type="match status" value="1"/>
</dbReference>
<dbReference type="PROSITE" id="PS51371">
    <property type="entry name" value="CBS"/>
    <property type="match status" value="1"/>
</dbReference>
<dbReference type="PROSITE" id="PS51846">
    <property type="entry name" value="CNNM"/>
    <property type="match status" value="1"/>
</dbReference>
<sequence length="428" mass="48044">MEHISTTTLIIILIIMVVISAYFSGSETGMMTLNRYRLRHMAKQGNRSAKRVEKLLRKPDRLISLVLIGNNLVNILASALGTIVGMRLYGDAGVAIATGVLTFVVLVFAEVLPKTIAALYPEKVAYPSSFLLAPLQILMMPLVWLLNAITRMLMRMMGIKTDIVVSGSLSKEELRTIVHESRSQISRRNQDMLLSVLDLEKMTVDDIMVPRSEIIGIDINDDWKSILRQLSHSPHGRIVLYRDSLDDAISMLRVREAWRLMSEKKEFTKETMLRAADEIYFVPEGTPLSTQLVKFQRNKKKVGLVVNEYGDIQGLVTVEDILEEIVGDFTTSMSPTLAEEVTPQNDGSVIIDGTANVREINKAFNWHLPEDDARTVNGVILEALEEIPVAGTRVRIGEYDIDILDVQDNMIKQVKVFPVKPLRESVAE</sequence>
<organism>
    <name type="scientific">Escherichia coli (strain K12)</name>
    <dbReference type="NCBI Taxonomy" id="83333"/>
    <lineage>
        <taxon>Bacteria</taxon>
        <taxon>Pseudomonadati</taxon>
        <taxon>Pseudomonadota</taxon>
        <taxon>Gammaproteobacteria</taxon>
        <taxon>Enterobacterales</taxon>
        <taxon>Enterobacteriaceae</taxon>
        <taxon>Escherichia</taxon>
    </lineage>
</organism>
<reference key="1">
    <citation type="journal article" date="1997" name="DNA Res.">
        <title>Construction of a contiguous 874-kb sequence of the Escherichia coli-K12 genome corresponding to 50.0-68.8 min on the linkage map and analysis of its sequence features.</title>
        <authorList>
            <person name="Yamamoto Y."/>
            <person name="Aiba H."/>
            <person name="Baba T."/>
            <person name="Hayashi K."/>
            <person name="Inada T."/>
            <person name="Isono K."/>
            <person name="Itoh T."/>
            <person name="Kimura S."/>
            <person name="Kitagawa M."/>
            <person name="Makino K."/>
            <person name="Miki T."/>
            <person name="Mitsuhashi N."/>
            <person name="Mizobuchi K."/>
            <person name="Mori H."/>
            <person name="Nakade S."/>
            <person name="Nakamura Y."/>
            <person name="Nashimoto H."/>
            <person name="Oshima T."/>
            <person name="Oyama S."/>
            <person name="Saito N."/>
            <person name="Sampei G."/>
            <person name="Satoh Y."/>
            <person name="Sivasundaram S."/>
            <person name="Tagami H."/>
            <person name="Takahashi H."/>
            <person name="Takeda J."/>
            <person name="Takemoto K."/>
            <person name="Uehara K."/>
            <person name="Wada C."/>
            <person name="Yamagata S."/>
            <person name="Horiuchi T."/>
        </authorList>
    </citation>
    <scope>NUCLEOTIDE SEQUENCE [LARGE SCALE GENOMIC DNA]</scope>
    <source>
        <strain>K12 / W3110 / ATCC 27325 / DSM 5911</strain>
    </source>
</reference>
<reference key="2">
    <citation type="journal article" date="1997" name="Science">
        <title>The complete genome sequence of Escherichia coli K-12.</title>
        <authorList>
            <person name="Blattner F.R."/>
            <person name="Plunkett G. III"/>
            <person name="Bloch C.A."/>
            <person name="Perna N.T."/>
            <person name="Burland V."/>
            <person name="Riley M."/>
            <person name="Collado-Vides J."/>
            <person name="Glasner J.D."/>
            <person name="Rode C.K."/>
            <person name="Mayhew G.F."/>
            <person name="Gregor J."/>
            <person name="Davis N.W."/>
            <person name="Kirkpatrick H.A."/>
            <person name="Goeden M.A."/>
            <person name="Rose D.J."/>
            <person name="Mau B."/>
            <person name="Shao Y."/>
        </authorList>
    </citation>
    <scope>NUCLEOTIDE SEQUENCE [LARGE SCALE GENOMIC DNA]</scope>
    <source>
        <strain>K12 / MG1655 / ATCC 47076</strain>
    </source>
</reference>
<reference key="3">
    <citation type="journal article" date="2006" name="Nucleic Acids Res.">
        <title>Escherichia coli K-12: a cooperatively developed annotation snapshot -- 2005.</title>
        <authorList>
            <person name="Riley M."/>
            <person name="Abe T."/>
            <person name="Arnaud M.B."/>
            <person name="Berlyn M.K.B."/>
            <person name="Blattner F.R."/>
            <person name="Chaudhuri R.R."/>
            <person name="Glasner J.D."/>
            <person name="Horiuchi T."/>
            <person name="Keseler I.M."/>
            <person name="Kosuge T."/>
            <person name="Mori H."/>
            <person name="Perna N.T."/>
            <person name="Plunkett G. III"/>
            <person name="Rudd K.E."/>
            <person name="Serres M.H."/>
            <person name="Thomas G.H."/>
            <person name="Thomson N.R."/>
            <person name="Wishart D."/>
            <person name="Wanner B.L."/>
        </authorList>
    </citation>
    <scope>SEQUENCE REVISION</scope>
</reference>
<reference key="4">
    <citation type="journal article" date="2006" name="Mol. Syst. Biol.">
        <title>Highly accurate genome sequences of Escherichia coli K-12 strains MG1655 and W3110.</title>
        <authorList>
            <person name="Hayashi K."/>
            <person name="Morooka N."/>
            <person name="Yamamoto Y."/>
            <person name="Fujita K."/>
            <person name="Isono K."/>
            <person name="Choi S."/>
            <person name="Ohtsubo E."/>
            <person name="Baba T."/>
            <person name="Wanner B.L."/>
            <person name="Mori H."/>
            <person name="Horiuchi T."/>
        </authorList>
    </citation>
    <scope>NUCLEOTIDE SEQUENCE [LARGE SCALE GENOMIC DNA]</scope>
    <source>
        <strain>K12 / W3110 / ATCC 27325 / DSM 5911</strain>
    </source>
</reference>
<reference key="5">
    <citation type="journal article" date="1988" name="Nucleic Acids Res.">
        <title>Sequence analysis and transcriptional regulation of the Escherichia coli grpE gene, encoding a heat shock protein.</title>
        <authorList>
            <person name="Lipinska B."/>
            <person name="King J."/>
            <person name="Ang D."/>
            <person name="Georgopoulos C."/>
        </authorList>
    </citation>
    <scope>NUCLEOTIDE SEQUENCE [GENOMIC DNA] OF 322-428</scope>
    <source>
        <strain>B178</strain>
    </source>
</reference>
<reference key="6">
    <citation type="unpublished observations" date="1994-08">
        <authorList>
            <person name="Rudd K.E."/>
        </authorList>
    </citation>
    <scope>IDENTIFICATION</scope>
</reference>
<reference key="7">
    <citation type="journal article" date="2005" name="Science">
        <title>Global topology analysis of the Escherichia coli inner membrane proteome.</title>
        <authorList>
            <person name="Daley D.O."/>
            <person name="Rapp M."/>
            <person name="Granseth E."/>
            <person name="Melen K."/>
            <person name="Drew D."/>
            <person name="von Heijne G."/>
        </authorList>
    </citation>
    <scope>TOPOLOGY [LARGE SCALE ANALYSIS]</scope>
    <source>
        <strain>K12 / MG1655 / ATCC 47076</strain>
    </source>
</reference>